<gene>
    <name type="primary">RHO</name>
    <name type="synonym">OPN2</name>
</gene>
<comment type="function">
    <text evidence="4 15 19 21 24 33 44">Photoreceptor required for image-forming vision at low light intensity (PubMed:7846071, PubMed:8107847). Required for photoreceptor cell viability after birth (PubMed:12566452, PubMed:2215617). Light-induced isomerization of the chromophore 11-cis-retinal to all-trans-retinal triggers a conformational change that activates signaling via G-proteins (PubMed:26200343, PubMed:28524165, PubMed:28753425, PubMed:8107847). Subsequent receptor phosphorylation mediates displacement of the bound G-protein alpha subunit by the arrestin SAG and terminates signaling (PubMed:26200343, PubMed:28524165).</text>
</comment>
<comment type="subunit">
    <text evidence="1 2 19 20 21">Homodimer (By similarity). May form a complex composed of RHO, GRK1 and RCVRN in a Ca(2+)-dependent manner; RCVRN prevents the interaction between GRK1 and RHO (By similarity). Interacts with GRK1 (PubMed:28524165). Interacts (phosphorylated form) with SAG (PubMed:26200343, PubMed:28524165, PubMed:28753425). Interacts with GNAT1 (PubMed:26200343). Interacts with GNAT3. SAG and G-proteins compete for a common binding site (PubMed:26200343). Interacts with PRCD; the interaction promotes PRCD stability (By similarity). Forms a complex with ASAP1 and ARF4. Forms a complex with ASAP1, RAB11A, Rabin8/RAB3IP, ARF4 and RAB11FIP3; the complex regulates Golgi-to-cilia rhodopsin/RHO transport in photoreceptors (By similarity).</text>
</comment>
<comment type="interaction">
    <interactant intactId="EBI-1394177">
        <id>P08100</id>
    </interactant>
    <interactant intactId="EBI-7797864">
        <id>P11912</id>
        <label>CD79A</label>
    </interactant>
    <organismsDiffer>false</organismsDiffer>
    <experiments>3</experiments>
</comment>
<comment type="interaction">
    <interactant intactId="EBI-1394177">
        <id>P08100</id>
    </interactant>
    <interactant intactId="EBI-296817">
        <id>O95405</id>
        <label>ZFYVE9</label>
    </interactant>
    <organismsDiffer>false</organismsDiffer>
    <experiments>2</experiments>
</comment>
<comment type="subcellular location">
    <subcellularLocation>
        <location evidence="4 12 18 19 21">Membrane</location>
        <topology evidence="12 19 21">Multi-pass membrane protein</topology>
    </subcellularLocation>
    <subcellularLocation>
        <location evidence="18">Cell projection</location>
        <location evidence="18">Cilium</location>
        <location evidence="18">Photoreceptor outer segment</location>
    </subcellularLocation>
    <text evidence="18">Synthesized in the inner segment (IS) of rod photoreceptor cells before vectorial transport to disk membranes in the rod outer segment (OS) photosensory cilia.</text>
</comment>
<comment type="tissue specificity">
    <text>Rod shaped photoreceptor cells which mediate vision in dim light.</text>
</comment>
<comment type="PTM">
    <text evidence="1 20">Phosphorylated on some or all of the serine and threonine residues present in the C-terminal region (By similarity). After activation by light, phosphorylated by GRK1 (in vitro) (PubMed:28524165).</text>
</comment>
<comment type="PTM">
    <text evidence="4">Contains one covalently linked retinal chromophore. Upon light absorption, the covalently bound 11-cis-retinal is converted to all-trans-retinal. After hydrolysis of the Schiff base and release of the covalently bound all-trans-retinal, active rhodopsin is regenerated by binding of a fresh molecule of 11-cis-retinal (PubMed:12566452).</text>
</comment>
<comment type="disease" evidence="4 5 6 7 8 9 10 11 12 13 14 15 16 17 23 25 26 27 29 30 31 32 34 35 37 38 39 40 41">
    <disease id="DI-00974">
        <name>Retinitis pigmentosa 4</name>
        <acronym>RP4</acronym>
        <description>A retinal dystrophy belonging to the group of pigmentary retinopathies. Retinitis pigmentosa is characterized by retinal pigment deposits visible on fundus examination and primary loss of rod photoreceptor cells followed by secondary loss of cone photoreceptors. Patients typically have night vision blindness and loss of midperipheral visual field. As their condition progresses, they lose their far peripheral visual field and eventually central vision as well.</description>
        <dbReference type="MIM" id="613731"/>
    </disease>
    <text>The disease is caused by variants affecting the gene represented in this entry.</text>
</comment>
<comment type="disease" evidence="24 33 36 42">
    <disease id="DI-00371">
        <name>Night blindness, congenital stationary, autosomal dominant 1</name>
        <acronym>CSNBAD1</acronym>
        <description>A non-progressive retinal disorder characterized by impaired night vision, often associated with nystagmus and myopia.</description>
        <dbReference type="MIM" id="610445"/>
    </disease>
    <text>The disease is caused by variants affecting the gene represented in this entry.</text>
</comment>
<comment type="similarity">
    <text evidence="3">Belongs to the G-protein coupled receptor 1 family. Opsin subfamily.</text>
</comment>
<comment type="online information" name="Wikipedia">
    <link uri="https://en.wikipedia.org/wiki/Rhodopsin"/>
    <text>Rhodopsin entry</text>
</comment>
<protein>
    <recommendedName>
        <fullName>Rhodopsin</fullName>
    </recommendedName>
    <alternativeName>
        <fullName>Opsin-2</fullName>
    </alternativeName>
</protein>
<sequence>MNGTEGPNFYVPFSNATGVVRSPFEYPQYYLAEPWQFSMLAAYMFLLIVLGFPINFLTLYVTVQHKKLRTPLNYILLNLAVADLFMVLGGFTSTLYTSLHGYFVFGPTGCNLEGFFATLGGEIALWSLVVLAIERYVVVCKPMSNFRFGENHAIMGVAFTWVMALACAAPPLAGWSRYIPEGLQCSCGIDYYTLKPEVNNESFVIYMFVVHFTIPMIIIFFCYGQLVFTVKEAAAQQQESATTQKAEKEVTRMVIIMVIAFLICWVPYASVAFYIFTHQGSNFGPIFMTIPAFFAKSAAIYNPVIYIMMNKQFRNCMLTTICCGKNPLGDDEASATVSKTETSQVAPA</sequence>
<organism>
    <name type="scientific">Homo sapiens</name>
    <name type="common">Human</name>
    <dbReference type="NCBI Taxonomy" id="9606"/>
    <lineage>
        <taxon>Eukaryota</taxon>
        <taxon>Metazoa</taxon>
        <taxon>Chordata</taxon>
        <taxon>Craniata</taxon>
        <taxon>Vertebrata</taxon>
        <taxon>Euteleostomi</taxon>
        <taxon>Mammalia</taxon>
        <taxon>Eutheria</taxon>
        <taxon>Euarchontoglires</taxon>
        <taxon>Primates</taxon>
        <taxon>Haplorrhini</taxon>
        <taxon>Catarrhini</taxon>
        <taxon>Hominidae</taxon>
        <taxon>Homo</taxon>
    </lineage>
</organism>
<proteinExistence type="evidence at protein level"/>
<accession>P08100</accession>
<accession>Q16414</accession>
<accession>Q2M249</accession>
<keyword id="KW-0002">3D-structure</keyword>
<keyword id="KW-0007">Acetylation</keyword>
<keyword id="KW-0966">Cell projection</keyword>
<keyword id="KW-0157">Chromophore</keyword>
<keyword id="KW-1014">Congenital stationary night blindness</keyword>
<keyword id="KW-0225">Disease variant</keyword>
<keyword id="KW-1015">Disulfide bond</keyword>
<keyword id="KW-0297">G-protein coupled receptor</keyword>
<keyword id="KW-0325">Glycoprotein</keyword>
<keyword id="KW-0449">Lipoprotein</keyword>
<keyword id="KW-0472">Membrane</keyword>
<keyword id="KW-0479">Metal-binding</keyword>
<keyword id="KW-0564">Palmitate</keyword>
<keyword id="KW-0597">Phosphoprotein</keyword>
<keyword id="KW-0600">Photoreceptor protein</keyword>
<keyword id="KW-1267">Proteomics identification</keyword>
<keyword id="KW-0675">Receptor</keyword>
<keyword id="KW-1185">Reference proteome</keyword>
<keyword id="KW-0681">Retinal protein</keyword>
<keyword id="KW-0682">Retinitis pigmentosa</keyword>
<keyword id="KW-0716">Sensory transduction</keyword>
<keyword id="KW-0807">Transducer</keyword>
<keyword id="KW-0812">Transmembrane</keyword>
<keyword id="KW-1133">Transmembrane helix</keyword>
<keyword id="KW-0844">Vision</keyword>
<keyword id="KW-0862">Zinc</keyword>
<name>OPSD_HUMAN</name>
<dbReference type="EMBL" id="U49742">
    <property type="protein sequence ID" value="AAC31763.1"/>
    <property type="molecule type" value="Genomic_DNA"/>
</dbReference>
<dbReference type="EMBL" id="AB065668">
    <property type="protein sequence ID" value="BAC05894.1"/>
    <property type="molecule type" value="Genomic_DNA"/>
</dbReference>
<dbReference type="EMBL" id="BX537381">
    <property type="protein sequence ID" value="CAD97623.1"/>
    <property type="molecule type" value="mRNA"/>
</dbReference>
<dbReference type="EMBL" id="BC112104">
    <property type="protein sequence ID" value="AAI12105.1"/>
    <property type="molecule type" value="mRNA"/>
</dbReference>
<dbReference type="EMBL" id="BC112106">
    <property type="protein sequence ID" value="AAI12107.1"/>
    <property type="molecule type" value="mRNA"/>
</dbReference>
<dbReference type="EMBL" id="U16824">
    <property type="protein sequence ID" value="AAA97436.1"/>
    <property type="molecule type" value="Genomic_DNA"/>
</dbReference>
<dbReference type="EMBL" id="S81166">
    <property type="protein sequence ID" value="AAB35906.1"/>
    <property type="molecule type" value="Genomic_DNA"/>
</dbReference>
<dbReference type="CCDS" id="CCDS3063.1"/>
<dbReference type="PIR" id="A41200">
    <property type="entry name" value="OOHU"/>
</dbReference>
<dbReference type="RefSeq" id="NP_000530.1">
    <property type="nucleotide sequence ID" value="NM_000539.3"/>
</dbReference>
<dbReference type="PDB" id="4ZWJ">
    <property type="method" value="X-ray"/>
    <property type="resolution" value="3.30 A"/>
    <property type="chains" value="A/B/C/D=1-348"/>
</dbReference>
<dbReference type="PDB" id="5DGY">
    <property type="method" value="X-ray"/>
    <property type="resolution" value="7.70 A"/>
    <property type="chains" value="A/B/C/D=1-348"/>
</dbReference>
<dbReference type="PDB" id="5W0P">
    <property type="method" value="X-ray"/>
    <property type="resolution" value="3.01 A"/>
    <property type="chains" value="A/B/C/D=1-348"/>
</dbReference>
<dbReference type="PDB" id="6CMO">
    <property type="method" value="EM"/>
    <property type="resolution" value="4.50 A"/>
    <property type="chains" value="R=3-323"/>
</dbReference>
<dbReference type="PDBsum" id="4ZWJ"/>
<dbReference type="PDBsum" id="5DGY"/>
<dbReference type="PDBsum" id="5W0P"/>
<dbReference type="PDBsum" id="6CMO"/>
<dbReference type="EMDB" id="EMD-7517"/>
<dbReference type="SMR" id="P08100"/>
<dbReference type="BioGRID" id="111942">
    <property type="interactions" value="12"/>
</dbReference>
<dbReference type="FunCoup" id="P08100">
    <property type="interactions" value="160"/>
</dbReference>
<dbReference type="IntAct" id="P08100">
    <property type="interactions" value="4"/>
</dbReference>
<dbReference type="STRING" id="9606.ENSP00000296271"/>
<dbReference type="ChEMBL" id="CHEMBL4296308"/>
<dbReference type="DrugBank" id="DB04233">
    <property type="generic name" value="(Hydroxyethyloxy)Tri(Ethyloxy)Octane"/>
</dbReference>
<dbReference type="DrugBank" id="DB01728">
    <property type="generic name" value="1,2-dihexadecanoyl-sn-glycero-3-phosphoethanolamine"/>
</dbReference>
<dbReference type="DrugBank" id="DB03152">
    <property type="generic name" value="B-2-Octylglucoside"/>
</dbReference>
<dbReference type="DrugBank" id="DB02451">
    <property type="generic name" value="B-nonylglucoside"/>
</dbReference>
<dbReference type="DrugBank" id="DB04522">
    <property type="generic name" value="Dexfosfoserine"/>
</dbReference>
<dbReference type="DrugBank" id="DB04147">
    <property type="generic name" value="Dodecyldimethylamine N-oxide"/>
</dbReference>
<dbReference type="DrugBank" id="DB01159">
    <property type="generic name" value="Halothane"/>
</dbReference>
<dbReference type="DrugBank" id="DB04079">
    <property type="generic name" value="Heptane-1,2,3-Triol"/>
</dbReference>
<dbReference type="DrugBank" id="DB04450">
    <property type="generic name" value="Heptyl 1-Thiohexopyranoside"/>
</dbReference>
<dbReference type="DrugBank" id="DB03381">
    <property type="generic name" value="Hexadecanal"/>
</dbReference>
<dbReference type="DrugBank" id="DB01646">
    <property type="generic name" value="N-Acetylmethionine"/>
</dbReference>
<dbReference type="DrugBank" id="DB03796">
    <property type="generic name" value="Palmitic Acid"/>
</dbReference>
<dbReference type="DrugBank" id="DB02482">
    <property type="generic name" value="Phosphonothreonine"/>
</dbReference>
<dbReference type="TCDB" id="9.A.14.1.2">
    <property type="family name" value="the g-protein-coupled receptor (gpcr) family"/>
</dbReference>
<dbReference type="GlyConnect" id="525">
    <property type="glycosylation" value="12 N-Linked glycans"/>
</dbReference>
<dbReference type="GlyCosmos" id="P08100">
    <property type="glycosylation" value="2 sites, 23 glycans"/>
</dbReference>
<dbReference type="GlyGen" id="P08100">
    <property type="glycosylation" value="13 sites, 23 N-linked glycans (1 site)"/>
</dbReference>
<dbReference type="iPTMnet" id="P08100"/>
<dbReference type="PhosphoSitePlus" id="P08100"/>
<dbReference type="SwissPalm" id="P08100"/>
<dbReference type="BioMuta" id="RHO"/>
<dbReference type="DMDM" id="129207"/>
<dbReference type="MassIVE" id="P08100"/>
<dbReference type="PaxDb" id="9606-ENSP00000296271"/>
<dbReference type="PeptideAtlas" id="P08100"/>
<dbReference type="ProteomicsDB" id="52066"/>
<dbReference type="Antibodypedia" id="17456">
    <property type="antibodies" value="508 antibodies from 38 providers"/>
</dbReference>
<dbReference type="DNASU" id="6010"/>
<dbReference type="Ensembl" id="ENST00000296271.4">
    <property type="protein sequence ID" value="ENSP00000296271.3"/>
    <property type="gene ID" value="ENSG00000163914.5"/>
</dbReference>
<dbReference type="GeneID" id="6010"/>
<dbReference type="KEGG" id="hsa:6010"/>
<dbReference type="MANE-Select" id="ENST00000296271.4">
    <property type="protein sequence ID" value="ENSP00000296271.3"/>
    <property type="RefSeq nucleotide sequence ID" value="NM_000539.3"/>
    <property type="RefSeq protein sequence ID" value="NP_000530.1"/>
</dbReference>
<dbReference type="UCSC" id="uc003emt.4">
    <property type="organism name" value="human"/>
</dbReference>
<dbReference type="AGR" id="HGNC:10012"/>
<dbReference type="CTD" id="6010"/>
<dbReference type="DisGeNET" id="6010"/>
<dbReference type="GeneCards" id="RHO"/>
<dbReference type="GeneReviews" id="RHO"/>
<dbReference type="HGNC" id="HGNC:10012">
    <property type="gene designation" value="RHO"/>
</dbReference>
<dbReference type="HPA" id="ENSG00000163914">
    <property type="expression patterns" value="Tissue enriched (retina)"/>
</dbReference>
<dbReference type="MalaCards" id="RHO"/>
<dbReference type="MIM" id="180380">
    <property type="type" value="gene"/>
</dbReference>
<dbReference type="MIM" id="610445">
    <property type="type" value="phenotype"/>
</dbReference>
<dbReference type="MIM" id="613731">
    <property type="type" value="phenotype"/>
</dbReference>
<dbReference type="neXtProt" id="NX_P08100"/>
<dbReference type="OpenTargets" id="ENSG00000163914"/>
<dbReference type="Orphanet" id="215">
    <property type="disease" value="Congenital stationary night blindness"/>
</dbReference>
<dbReference type="Orphanet" id="791">
    <property type="disease" value="Retinitis pigmentosa"/>
</dbReference>
<dbReference type="Orphanet" id="52427">
    <property type="disease" value="Retinitis punctata albescens"/>
</dbReference>
<dbReference type="PharmGKB" id="PA34390"/>
<dbReference type="VEuPathDB" id="HostDB:ENSG00000163914"/>
<dbReference type="eggNOG" id="KOG3656">
    <property type="taxonomic scope" value="Eukaryota"/>
</dbReference>
<dbReference type="GeneTree" id="ENSGT01030000234549"/>
<dbReference type="HOGENOM" id="CLU_009579_3_0_1"/>
<dbReference type="InParanoid" id="P08100"/>
<dbReference type="OMA" id="VICGFTT"/>
<dbReference type="OrthoDB" id="5962323at2759"/>
<dbReference type="PAN-GO" id="P08100">
    <property type="GO annotations" value="6 GO annotations based on evolutionary models"/>
</dbReference>
<dbReference type="PhylomeDB" id="P08100"/>
<dbReference type="TreeFam" id="TF324998"/>
<dbReference type="PathwayCommons" id="P08100"/>
<dbReference type="Reactome" id="R-HSA-2453902">
    <property type="pathway name" value="The canonical retinoid cycle in rods (twilight vision)"/>
</dbReference>
<dbReference type="Reactome" id="R-HSA-2485179">
    <property type="pathway name" value="Activation of the phototransduction cascade"/>
</dbReference>
<dbReference type="Reactome" id="R-HSA-2514859">
    <property type="pathway name" value="Inactivation, recovery and regulation of the phototransduction cascade"/>
</dbReference>
<dbReference type="Reactome" id="R-HSA-418594">
    <property type="pathway name" value="G alpha (i) signalling events"/>
</dbReference>
<dbReference type="Reactome" id="R-HSA-419771">
    <property type="pathway name" value="Opsins"/>
</dbReference>
<dbReference type="Reactome" id="R-HSA-5620916">
    <property type="pathway name" value="VxPx cargo-targeting to cilium"/>
</dbReference>
<dbReference type="SignaLink" id="P08100"/>
<dbReference type="SIGNOR" id="P08100"/>
<dbReference type="BioGRID-ORCS" id="6010">
    <property type="hits" value="10 hits in 1139 CRISPR screens"/>
</dbReference>
<dbReference type="ChiTaRS" id="RHO">
    <property type="organism name" value="human"/>
</dbReference>
<dbReference type="GeneWiki" id="Rhodopsin"/>
<dbReference type="GenomeRNAi" id="6010"/>
<dbReference type="Pharos" id="P08100">
    <property type="development level" value="Tbio"/>
</dbReference>
<dbReference type="PRO" id="PR:P08100"/>
<dbReference type="Proteomes" id="UP000005640">
    <property type="component" value="Chromosome 3"/>
</dbReference>
<dbReference type="RNAct" id="P08100">
    <property type="molecule type" value="protein"/>
</dbReference>
<dbReference type="Bgee" id="ENSG00000163914">
    <property type="expression patterns" value="Expressed in optic choroid and 33 other cell types or tissues"/>
</dbReference>
<dbReference type="GO" id="GO:0005911">
    <property type="term" value="C:cell-cell junction"/>
    <property type="evidence" value="ECO:0007669"/>
    <property type="project" value="Ensembl"/>
</dbReference>
<dbReference type="GO" id="GO:0060170">
    <property type="term" value="C:ciliary membrane"/>
    <property type="evidence" value="ECO:0000304"/>
    <property type="project" value="Reactome"/>
</dbReference>
<dbReference type="GO" id="GO:0005794">
    <property type="term" value="C:Golgi apparatus"/>
    <property type="evidence" value="ECO:0000314"/>
    <property type="project" value="MGI"/>
</dbReference>
<dbReference type="GO" id="GO:0000139">
    <property type="term" value="C:Golgi membrane"/>
    <property type="evidence" value="ECO:0000304"/>
    <property type="project" value="Reactome"/>
</dbReference>
<dbReference type="GO" id="GO:0030660">
    <property type="term" value="C:Golgi-associated vesicle membrane"/>
    <property type="evidence" value="ECO:0000304"/>
    <property type="project" value="Reactome"/>
</dbReference>
<dbReference type="GO" id="GO:0016020">
    <property type="term" value="C:membrane"/>
    <property type="evidence" value="ECO:0000250"/>
    <property type="project" value="UniProtKB"/>
</dbReference>
<dbReference type="GO" id="GO:0097381">
    <property type="term" value="C:photoreceptor disc membrane"/>
    <property type="evidence" value="ECO:0000314"/>
    <property type="project" value="UniProtKB"/>
</dbReference>
<dbReference type="GO" id="GO:0001917">
    <property type="term" value="C:photoreceptor inner segment"/>
    <property type="evidence" value="ECO:0000314"/>
    <property type="project" value="MGI"/>
</dbReference>
<dbReference type="GO" id="GO:0060342">
    <property type="term" value="C:photoreceptor inner segment membrane"/>
    <property type="evidence" value="ECO:0000314"/>
    <property type="project" value="UniProtKB"/>
</dbReference>
<dbReference type="GO" id="GO:0001750">
    <property type="term" value="C:photoreceptor outer segment"/>
    <property type="evidence" value="ECO:0000314"/>
    <property type="project" value="MGI"/>
</dbReference>
<dbReference type="GO" id="GO:0042622">
    <property type="term" value="C:photoreceptor outer segment membrane"/>
    <property type="evidence" value="ECO:0000314"/>
    <property type="project" value="UniProtKB"/>
</dbReference>
<dbReference type="GO" id="GO:0005886">
    <property type="term" value="C:plasma membrane"/>
    <property type="evidence" value="ECO:0000314"/>
    <property type="project" value="UniProtKB"/>
</dbReference>
<dbReference type="GO" id="GO:0120200">
    <property type="term" value="C:rod photoreceptor outer segment"/>
    <property type="evidence" value="ECO:0007669"/>
    <property type="project" value="Ensembl"/>
</dbReference>
<dbReference type="GO" id="GO:1990913">
    <property type="term" value="C:sperm head plasma membrane"/>
    <property type="evidence" value="ECO:0007669"/>
    <property type="project" value="Ensembl"/>
</dbReference>
<dbReference type="GO" id="GO:0097225">
    <property type="term" value="C:sperm midpiece"/>
    <property type="evidence" value="ECO:0007669"/>
    <property type="project" value="Ensembl"/>
</dbReference>
<dbReference type="GO" id="GO:0005502">
    <property type="term" value="F:11-cis retinal binding"/>
    <property type="evidence" value="ECO:0000250"/>
    <property type="project" value="UniProtKB"/>
</dbReference>
<dbReference type="GO" id="GO:0008020">
    <property type="term" value="F:G protein-coupled photoreceptor activity"/>
    <property type="evidence" value="ECO:0000250"/>
    <property type="project" value="UniProtKB"/>
</dbReference>
<dbReference type="GO" id="GO:0004930">
    <property type="term" value="F:G protein-coupled receptor activity"/>
    <property type="evidence" value="ECO:0000304"/>
    <property type="project" value="ProtInc"/>
</dbReference>
<dbReference type="GO" id="GO:0046872">
    <property type="term" value="F:metal ion binding"/>
    <property type="evidence" value="ECO:0007669"/>
    <property type="project" value="UniProtKB-KW"/>
</dbReference>
<dbReference type="GO" id="GO:0016038">
    <property type="term" value="P:absorption of visible light"/>
    <property type="evidence" value="ECO:0000250"/>
    <property type="project" value="AgBase"/>
</dbReference>
<dbReference type="GO" id="GO:0071482">
    <property type="term" value="P:cellular response to light stimulus"/>
    <property type="evidence" value="ECO:0000318"/>
    <property type="project" value="GO_Central"/>
</dbReference>
<dbReference type="GO" id="GO:0050960">
    <property type="term" value="P:detection of temperature stimulus involved in thermoception"/>
    <property type="evidence" value="ECO:0007669"/>
    <property type="project" value="Ensembl"/>
</dbReference>
<dbReference type="GO" id="GO:0016056">
    <property type="term" value="P:G protein-coupled opsin signaling pathway"/>
    <property type="evidence" value="ECO:0000250"/>
    <property type="project" value="UniProtKB"/>
</dbReference>
<dbReference type="GO" id="GO:0007186">
    <property type="term" value="P:G protein-coupled receptor signaling pathway"/>
    <property type="evidence" value="ECO:0000315"/>
    <property type="project" value="UniProtKB"/>
</dbReference>
<dbReference type="GO" id="GO:0010467">
    <property type="term" value="P:gene expression"/>
    <property type="evidence" value="ECO:0007669"/>
    <property type="project" value="Ensembl"/>
</dbReference>
<dbReference type="GO" id="GO:0000226">
    <property type="term" value="P:microtubule cytoskeleton organization"/>
    <property type="evidence" value="ECO:0007669"/>
    <property type="project" value="Ensembl"/>
</dbReference>
<dbReference type="GO" id="GO:0045494">
    <property type="term" value="P:photoreceptor cell maintenance"/>
    <property type="evidence" value="ECO:0007669"/>
    <property type="project" value="Ensembl"/>
</dbReference>
<dbReference type="GO" id="GO:0007602">
    <property type="term" value="P:phototransduction"/>
    <property type="evidence" value="ECO:0000318"/>
    <property type="project" value="GO_Central"/>
</dbReference>
<dbReference type="GO" id="GO:0007603">
    <property type="term" value="P:phototransduction, visible light"/>
    <property type="evidence" value="ECO:0000304"/>
    <property type="project" value="ProtInc"/>
</dbReference>
<dbReference type="GO" id="GO:0071800">
    <property type="term" value="P:podosome assembly"/>
    <property type="evidence" value="ECO:0007669"/>
    <property type="project" value="Ensembl"/>
</dbReference>
<dbReference type="GO" id="GO:0009642">
    <property type="term" value="P:response to light intensity"/>
    <property type="evidence" value="ECO:0007669"/>
    <property type="project" value="Ensembl"/>
</dbReference>
<dbReference type="GO" id="GO:1904389">
    <property type="term" value="P:rod bipolar cell differentiation"/>
    <property type="evidence" value="ECO:0007669"/>
    <property type="project" value="Ensembl"/>
</dbReference>
<dbReference type="GO" id="GO:0043052">
    <property type="term" value="P:thermotaxis"/>
    <property type="evidence" value="ECO:0007669"/>
    <property type="project" value="Ensembl"/>
</dbReference>
<dbReference type="GO" id="GO:0007601">
    <property type="term" value="P:visual perception"/>
    <property type="evidence" value="ECO:0007669"/>
    <property type="project" value="UniProtKB-KW"/>
</dbReference>
<dbReference type="CDD" id="cd15080">
    <property type="entry name" value="7tmA_MWS_opsin"/>
    <property type="match status" value="1"/>
</dbReference>
<dbReference type="FunFam" id="1.20.1070.10:FF:000018">
    <property type="entry name" value="Rhodopsin"/>
    <property type="match status" value="1"/>
</dbReference>
<dbReference type="Gene3D" id="1.20.1070.10">
    <property type="entry name" value="Rhodopsin 7-helix transmembrane proteins"/>
    <property type="match status" value="1"/>
</dbReference>
<dbReference type="InterPro" id="IPR050125">
    <property type="entry name" value="GPCR_opsins"/>
</dbReference>
<dbReference type="InterPro" id="IPR000276">
    <property type="entry name" value="GPCR_Rhodpsn"/>
</dbReference>
<dbReference type="InterPro" id="IPR017452">
    <property type="entry name" value="GPCR_Rhodpsn_7TM"/>
</dbReference>
<dbReference type="InterPro" id="IPR001760">
    <property type="entry name" value="Opsin"/>
</dbReference>
<dbReference type="InterPro" id="IPR027430">
    <property type="entry name" value="Retinal_BS"/>
</dbReference>
<dbReference type="InterPro" id="IPR000732">
    <property type="entry name" value="Rhodopsin"/>
</dbReference>
<dbReference type="InterPro" id="IPR019477">
    <property type="entry name" value="Rhodopsin_N"/>
</dbReference>
<dbReference type="PANTHER" id="PTHR24240">
    <property type="entry name" value="OPSIN"/>
    <property type="match status" value="1"/>
</dbReference>
<dbReference type="Pfam" id="PF00001">
    <property type="entry name" value="7tm_1"/>
    <property type="match status" value="1"/>
</dbReference>
<dbReference type="Pfam" id="PF10413">
    <property type="entry name" value="Rhodopsin_N"/>
    <property type="match status" value="1"/>
</dbReference>
<dbReference type="PRINTS" id="PR00237">
    <property type="entry name" value="GPCRRHODOPSN"/>
</dbReference>
<dbReference type="PRINTS" id="PR00238">
    <property type="entry name" value="OPSIN"/>
</dbReference>
<dbReference type="PRINTS" id="PR00579">
    <property type="entry name" value="RHODOPSIN"/>
</dbReference>
<dbReference type="SMART" id="SM01381">
    <property type="entry name" value="7TM_GPCR_Srsx"/>
    <property type="match status" value="1"/>
</dbReference>
<dbReference type="SUPFAM" id="SSF81321">
    <property type="entry name" value="Family A G protein-coupled receptor-like"/>
    <property type="match status" value="1"/>
</dbReference>
<dbReference type="PROSITE" id="PS00237">
    <property type="entry name" value="G_PROTEIN_RECEP_F1_1"/>
    <property type="match status" value="1"/>
</dbReference>
<dbReference type="PROSITE" id="PS50262">
    <property type="entry name" value="G_PROTEIN_RECEP_F1_2"/>
    <property type="match status" value="1"/>
</dbReference>
<dbReference type="PROSITE" id="PS00238">
    <property type="entry name" value="OPSIN"/>
    <property type="match status" value="1"/>
</dbReference>
<feature type="chain" id="PRO_0000197677" description="Rhodopsin">
    <location>
        <begin position="1"/>
        <end position="348"/>
    </location>
</feature>
<feature type="topological domain" description="Extracellular" evidence="19 21">
    <location>
        <begin position="1"/>
        <end position="36"/>
    </location>
</feature>
<feature type="transmembrane region" description="Helical; Name=1" evidence="19 21">
    <location>
        <begin position="37"/>
        <end position="61"/>
    </location>
</feature>
<feature type="topological domain" description="Cytoplasmic" evidence="19 21">
    <location>
        <begin position="62"/>
        <end position="73"/>
    </location>
</feature>
<feature type="transmembrane region" description="Helical; Name=2" evidence="19 21">
    <location>
        <begin position="74"/>
        <end position="96"/>
    </location>
</feature>
<feature type="topological domain" description="Extracellular" evidence="19 21">
    <location>
        <begin position="97"/>
        <end position="110"/>
    </location>
</feature>
<feature type="transmembrane region" description="Helical; Name=3" evidence="19 21">
    <location>
        <begin position="111"/>
        <end position="133"/>
    </location>
</feature>
<feature type="topological domain" description="Cytoplasmic" evidence="19 21">
    <location>
        <begin position="134"/>
        <end position="152"/>
    </location>
</feature>
<feature type="transmembrane region" description="Helical; Name=4" evidence="19 21">
    <location>
        <begin position="153"/>
        <end position="173"/>
    </location>
</feature>
<feature type="topological domain" description="Extracellular" evidence="19 21">
    <location>
        <begin position="174"/>
        <end position="202"/>
    </location>
</feature>
<feature type="transmembrane region" description="Helical; Name=5" evidence="19 21">
    <location>
        <begin position="203"/>
        <end position="224"/>
    </location>
</feature>
<feature type="topological domain" description="Cytoplasmic" evidence="19 21">
    <location>
        <begin position="225"/>
        <end position="252"/>
    </location>
</feature>
<feature type="transmembrane region" description="Helical; Name=6" evidence="19 21">
    <location>
        <begin position="253"/>
        <end position="274"/>
    </location>
</feature>
<feature type="topological domain" description="Extracellular" evidence="19 21">
    <location>
        <begin position="275"/>
        <end position="284"/>
    </location>
</feature>
<feature type="transmembrane region" description="Helical; Name=7" evidence="19 21">
    <location>
        <begin position="285"/>
        <end position="309"/>
    </location>
</feature>
<feature type="topological domain" description="Cytoplasmic" evidence="19 21">
    <location>
        <begin position="310"/>
        <end position="348"/>
    </location>
</feature>
<feature type="region of interest" description="Interaction with SAG" evidence="19 21">
    <location>
        <begin position="330"/>
        <end position="348"/>
    </location>
</feature>
<feature type="short sequence motif" description="'Ionic lock' involved in activated form stabilization" evidence="43">
    <location>
        <begin position="134"/>
        <end position="136"/>
    </location>
</feature>
<feature type="binding site" evidence="1">
    <location>
        <position position="201"/>
    </location>
    <ligand>
        <name>Zn(2+)</name>
        <dbReference type="ChEBI" id="CHEBI:29105"/>
    </ligand>
</feature>
<feature type="binding site" evidence="1">
    <location>
        <position position="279"/>
    </location>
    <ligand>
        <name>Zn(2+)</name>
        <dbReference type="ChEBI" id="CHEBI:29105"/>
    </ligand>
</feature>
<feature type="site" description="Plays an important role in the conformation switch to the active conformation" evidence="19">
    <location>
        <position position="113"/>
    </location>
</feature>
<feature type="modified residue" description="N-acetylmethionine" evidence="1">
    <location>
        <position position="1"/>
    </location>
</feature>
<feature type="modified residue" description="N6-(retinylidene)lysine" evidence="1">
    <location>
        <position position="296"/>
    </location>
</feature>
<feature type="modified residue" description="Phosphoserine" evidence="21">
    <location>
        <position position="334"/>
    </location>
</feature>
<feature type="modified residue" description="Phosphothreonine" evidence="21">
    <location>
        <position position="336"/>
    </location>
</feature>
<feature type="modified residue" description="Phosphoserine" evidence="21">
    <location>
        <position position="338"/>
    </location>
</feature>
<feature type="modified residue" description="Phosphothreonine" evidence="1">
    <location>
        <position position="340"/>
    </location>
</feature>
<feature type="modified residue" description="Phosphothreonine" evidence="1">
    <location>
        <position position="342"/>
    </location>
</feature>
<feature type="modified residue" description="Phosphoserine" evidence="1">
    <location>
        <position position="343"/>
    </location>
</feature>
<feature type="lipid moiety-binding region" description="S-palmitoyl cysteine" evidence="1">
    <location>
        <position position="322"/>
    </location>
</feature>
<feature type="lipid moiety-binding region" description="S-palmitoyl cysteine" evidence="1">
    <location>
        <position position="323"/>
    </location>
</feature>
<feature type="glycosylation site" description="N-linked (GlcNAc...) asparagine" evidence="1">
    <location>
        <position position="2"/>
    </location>
</feature>
<feature type="glycosylation site" description="N-linked (GlcNAc...) asparagine" evidence="21">
    <location>
        <position position="15"/>
    </location>
</feature>
<feature type="disulfide bond" evidence="3 19 21">
    <location>
        <begin position="110"/>
        <end position="187"/>
    </location>
</feature>
<feature type="sequence variant" id="VAR_004765" description="In RP4." evidence="38">
    <original>T</original>
    <variation>K</variation>
    <location>
        <position position="4"/>
    </location>
</feature>
<feature type="sequence variant" id="VAR_004766" description="In RP4; dbSNP:rs104893786." evidence="35">
    <original>N</original>
    <variation>S</variation>
    <location>
        <position position="15"/>
    </location>
</feature>
<feature type="sequence variant" id="VAR_004767" description="In RP4; dbSNP:rs104893769." evidence="6 10">
    <original>T</original>
    <variation>M</variation>
    <location>
        <position position="17"/>
    </location>
</feature>
<feature type="sequence variant" id="VAR_004768" description="In RP4; most common variant; impairs protein folding; leads to interaction with EDEM1 followed by degradation by the ERAD system; dbSNP:rs104893768." evidence="4 10 12 14 15">
    <original>P</original>
    <variation>H</variation>
    <location>
        <position position="23"/>
    </location>
</feature>
<feature type="sequence variant" id="VAR_004769" description="In RP4; dbSNP:rs104893768." evidence="7">
    <original>P</original>
    <variation>L</variation>
    <location>
        <position position="23"/>
    </location>
</feature>
<feature type="sequence variant" id="VAR_004770" description="In RP4; dbSNP:rs2108749184." evidence="38">
    <original>Q</original>
    <variation>H</variation>
    <location>
        <position position="28"/>
    </location>
</feature>
<feature type="sequence variant" id="VAR_004771" description="In RP4." evidence="31">
    <original>L</original>
    <variation>R</variation>
    <location>
        <position position="40"/>
    </location>
</feature>
<feature type="sequence variant" id="VAR_004772" description="In RP4; dbSNP:rs774336493." evidence="30">
    <original>M</original>
    <variation>T</variation>
    <location>
        <position position="44"/>
    </location>
</feature>
<feature type="sequence variant" id="VAR_004773" description="In RP4; dbSNP:rs104893770." evidence="7">
    <original>F</original>
    <variation>L</variation>
    <location>
        <position position="45"/>
    </location>
</feature>
<feature type="sequence variant" id="VAR_004774" description="In RP4; dbSNP:rs2084757073." evidence="37">
    <original>L</original>
    <variation>R</variation>
    <location>
        <position position="46"/>
    </location>
</feature>
<feature type="sequence variant" id="VAR_004775" description="In dbSNP:rs149079952." evidence="34">
    <original>G</original>
    <variation>A</variation>
    <location>
        <position position="51"/>
    </location>
</feature>
<feature type="sequence variant" id="VAR_004776" description="In RP4; dbSNP:rs104893792." evidence="38">
    <original>G</original>
    <variation>R</variation>
    <location>
        <position position="51"/>
    </location>
</feature>
<feature type="sequence variant" id="VAR_004777" description="In RP4; dbSNP:rs149079952." evidence="7">
    <original>G</original>
    <variation>V</variation>
    <location>
        <position position="51"/>
    </location>
</feature>
<feature type="sequence variant" id="VAR_004778" description="In RP4; dbSNP:rs28933395." evidence="38">
    <original>P</original>
    <variation>R</variation>
    <location>
        <position position="53"/>
    </location>
</feature>
<feature type="sequence variant" id="VAR_004779" description="In RP4; dbSNP:rs28933394." evidence="10 15">
    <original>T</original>
    <variation>R</variation>
    <location>
        <position position="58"/>
    </location>
</feature>
<feature type="sequence variant" id="VAR_004780" description="In RP4.">
    <location>
        <begin position="68"/>
        <end position="71"/>
    </location>
</feature>
<feature type="sequence variant" id="VAR_004781" description="In RP4; dbSNP:rs104893771." evidence="38">
    <original>V</original>
    <variation>D</variation>
    <location>
        <position position="87"/>
    </location>
</feature>
<feature type="sequence variant" id="VAR_004782" description="In RP4; dbSNP:rs104893772." evidence="38">
    <original>G</original>
    <variation>D</variation>
    <location>
        <position position="89"/>
    </location>
</feature>
<feature type="sequence variant" id="VAR_004783" description="In CSNBAD1; constitutive activity in the absence of bound retinal; dbSNP:rs104893790." evidence="24 33">
    <original>G</original>
    <variation>D</variation>
    <location>
        <position position="90"/>
    </location>
</feature>
<feature type="sequence variant" id="VAR_004784" description="In CSNBAD1; dbSNP:rs104893796." evidence="42">
    <original>T</original>
    <variation>I</variation>
    <location>
        <position position="94"/>
    </location>
</feature>
<feature type="sequence variant" id="VAR_004785" description="Found in patients with pathologic myopia; uncertain significance; dbSNP:rs144317206." evidence="22 34">
    <original>V</original>
    <variation>I</variation>
    <location>
        <position position="104"/>
    </location>
</feature>
<feature type="sequence variant" id="VAR_004786" description="In RP4; dbSNP:rs104893773." evidence="34">
    <original>G</original>
    <variation>R</variation>
    <location>
        <position position="106"/>
    </location>
</feature>
<feature type="sequence variant" id="VAR_004787" description="In RP4; dbSNP:rs104893773." evidence="38">
    <original>G</original>
    <variation>W</variation>
    <location>
        <position position="106"/>
    </location>
</feature>
<feature type="sequence variant" id="VAR_004788" description="In RP4; dbSNP:rs1415160298." evidence="41">
    <original>G</original>
    <variation>R</variation>
    <location>
        <position position="109"/>
    </location>
</feature>
<feature type="sequence variant" id="VAR_004789" description="In RP4." evidence="25">
    <original>C</original>
    <variation>F</variation>
    <location>
        <position position="110"/>
    </location>
</feature>
<feature type="sequence variant" id="VAR_004790" description="In RP4; dbSNP:rs104893787." evidence="38">
    <original>C</original>
    <variation>Y</variation>
    <location>
        <position position="110"/>
    </location>
</feature>
<feature type="sequence variant" id="VAR_004791" description="In RP4; dbSNP:rs104893788." evidence="32">
    <original>G</original>
    <variation>D</variation>
    <location>
        <position position="114"/>
    </location>
</feature>
<feature type="sequence variant" id="VAR_004792" description="In RP4." evidence="38">
    <original>L</original>
    <variation>R</variation>
    <location>
        <position position="125"/>
    </location>
</feature>
<feature type="sequence variant" id="VAR_004793" description="In RP4; dbSNP:rs2108749921." evidence="27">
    <original>S</original>
    <variation>F</variation>
    <location>
        <position position="127"/>
    </location>
</feature>
<feature type="sequence variant" id="VAR_004794" description="In RP4; dbSNP:rs1553781140." evidence="25 27">
    <original>L</original>
    <variation>P</variation>
    <location>
        <position position="131"/>
    </location>
</feature>
<feature type="sequence variant" id="VAR_004795" description="In RP4; dbSNP:rs104893775." evidence="34">
    <original>R</original>
    <variation>G</variation>
    <location>
        <position position="135"/>
    </location>
</feature>
<feature type="sequence variant" id="VAR_004796" description="In RP4; dbSNP:rs104893774." evidence="38">
    <original>R</original>
    <variation>L</variation>
    <location>
        <position position="135"/>
    </location>
</feature>
<feature type="sequence variant" id="VAR_004797" description="In RP4; dbSNP:rs104893775." evidence="16 40">
    <original>R</original>
    <variation>W</variation>
    <location>
        <position position="135"/>
    </location>
</feature>
<feature type="sequence variant" id="VAR_004798" description="In RP4; dbSNP:rs2084775122." evidence="34">
    <original>C</original>
    <variation>S</variation>
    <location>
        <position position="140"/>
    </location>
</feature>
<feature type="sequence variant" id="VAR_004799" description="In RP4; autosomal recessive; dbSNP:rs104893791." evidence="13 28">
    <original>E</original>
    <variation>K</variation>
    <location>
        <position position="150"/>
    </location>
</feature>
<feature type="sequence variant" id="VAR_004800" description="In RP4; dbSNP:rs104893793." evidence="32">
    <original>A</original>
    <variation>E</variation>
    <location>
        <position position="164"/>
    </location>
</feature>
<feature type="sequence variant" id="VAR_004801" description="In RP4; dbSNP:rs104893793." evidence="25">
    <original>A</original>
    <variation>V</variation>
    <location>
        <position position="164"/>
    </location>
</feature>
<feature type="sequence variant" id="VAR_004802" description="In RP4." evidence="32">
    <original>C</original>
    <variation>R</variation>
    <location>
        <position position="167"/>
    </location>
</feature>
<feature type="sequence variant" id="VAR_004803" description="In RP4; dbSNP:rs2084776162." evidence="32">
    <original>P</original>
    <variation>L</variation>
    <location>
        <position position="171"/>
    </location>
</feature>
<feature type="sequence variant" id="VAR_004804" description="In RP4; dbSNP:rs2084776162." evidence="26">
    <original>P</original>
    <variation>Q</variation>
    <location>
        <position position="171"/>
    </location>
</feature>
<feature type="sequence variant" id="VAR_004805" description="In RP4; dbSNP:rs104893794." evidence="32">
    <original>P</original>
    <variation>S</variation>
    <location>
        <position position="171"/>
    </location>
</feature>
<feature type="sequence variant" id="VAR_004806" description="In RP4; dbSNP:rs104893776." evidence="38">
    <original>Y</original>
    <variation>C</variation>
    <location>
        <position position="178"/>
    </location>
</feature>
<feature type="sequence variant" id="VAR_004807" description="In RP4." evidence="27">
    <original>Y</original>
    <variation>N</variation>
    <location>
        <position position="178"/>
    </location>
</feature>
<feature type="sequence variant" id="VAR_068359" description="In RP4; dbSNP:rs1560046837." evidence="16">
    <original>P</original>
    <variation>S</variation>
    <location>
        <position position="180"/>
    </location>
</feature>
<feature type="sequence variant" id="VAR_004808" description="In RP4; dbSNP:rs775557680." evidence="38">
    <original>E</original>
    <variation>K</variation>
    <location>
        <position position="181"/>
    </location>
</feature>
<feature type="sequence variant" id="VAR_004809" description="In RP4; dbSNP:rs104893780." evidence="10">
    <original>G</original>
    <variation>S</variation>
    <location>
        <position position="182"/>
    </location>
</feature>
<feature type="sequence variant" id="VAR_004810" description="In RP4." evidence="38">
    <original>S</original>
    <variation>P</variation>
    <location>
        <position position="186"/>
    </location>
</feature>
<feature type="sequence variant" id="VAR_004811" description="In RP4; dbSNP:rs1424131846." evidence="34">
    <original>G</original>
    <variation>E</variation>
    <location>
        <position position="188"/>
    </location>
</feature>
<feature type="sequence variant" id="VAR_004812" description="In RP4; dbSNP:rs527236100." evidence="7">
    <original>G</original>
    <variation>R</variation>
    <location>
        <position position="188"/>
    </location>
</feature>
<feature type="sequence variant" id="VAR_004814" description="In RP4; dbSNP:rs104893777." evidence="38">
    <original>D</original>
    <variation>G</variation>
    <location>
        <position position="190"/>
    </location>
</feature>
<feature type="sequence variant" id="VAR_004813" description="In RP4; dbSNP:rs104893779." evidence="38">
    <original>D</original>
    <variation>N</variation>
    <location>
        <position position="190"/>
    </location>
</feature>
<feature type="sequence variant" id="VAR_004815" description="In RP4; dbSNP:rs104893779." evidence="38">
    <original>D</original>
    <variation>Y</variation>
    <location>
        <position position="190"/>
    </location>
</feature>
<feature type="sequence variant" id="VAR_004816" description="In RP4; dbSNP:rs104893782." evidence="5">
    <original>M</original>
    <variation>R</variation>
    <location>
        <position position="207"/>
    </location>
</feature>
<feature type="sequence variant" id="VAR_004817" description="Found in a patient with retinitis pigmentosa; uncertain significance; dbSNP:rs567288669." evidence="34">
    <original>V</original>
    <variation>M</variation>
    <location>
        <position position="209"/>
    </location>
</feature>
<feature type="sequence variant" id="VAR_004818" description="In RP4; dbSNP:rs28933993.">
    <original>H</original>
    <variation>P</variation>
    <location>
        <position position="211"/>
    </location>
</feature>
<feature type="sequence variant" id="VAR_004819" description="In RP4; dbSNP:rs28933993." evidence="34">
    <original>H</original>
    <variation>R</variation>
    <location>
        <position position="211"/>
    </location>
</feature>
<feature type="sequence variant" id="VAR_068360" description="In RP4." evidence="16">
    <original>I</original>
    <variation>N</variation>
    <location>
        <position position="214"/>
    </location>
</feature>
<feature type="sequence variant" id="VAR_004820" description="In RP4; dbSNP:rs984572250." evidence="31">
    <original>M</original>
    <variation>K</variation>
    <location>
        <position position="216"/>
    </location>
</feature>
<feature type="sequence variant" id="VAR_004821" description="In RP4; dbSNP:rs766161322." evidence="39">
    <original>F</original>
    <variation>C</variation>
    <location>
        <position position="220"/>
    </location>
</feature>
<feature type="sequence variant" id="VAR_004822" description="In RP4.">
    <original>C</original>
    <variation>R</variation>
    <location>
        <position position="222"/>
    </location>
</feature>
<feature type="sequence variant" id="VAR_004823" description="In RP4." evidence="11">
    <location>
        <position position="255"/>
    </location>
</feature>
<feature type="sequence variant" id="VAR_004824" description="In RP4.">
    <location>
        <position position="264"/>
    </location>
</feature>
<feature type="sequence variant" id="VAR_004825" description="In RP4; dbSNP:rs104893781." evidence="10">
    <original>P</original>
    <variation>L</variation>
    <location>
        <position position="267"/>
    </location>
</feature>
<feature type="sequence variant" id="VAR_004826" description="In RP4." evidence="27">
    <original>P</original>
    <variation>R</variation>
    <location>
        <position position="267"/>
    </location>
</feature>
<feature type="sequence variant" id="VAR_004827" description="In CSNBAD1; dbSNP:rs104893789." evidence="36">
    <original>A</original>
    <variation>E</variation>
    <location>
        <position position="292"/>
    </location>
</feature>
<feature type="sequence variant" id="VAR_004828" description="In RP4; dbSNP:rs29001653.">
    <original>K</original>
    <variation>E</variation>
    <location>
        <position position="296"/>
    </location>
</feature>
<feature type="sequence variant" id="VAR_004829" description="In RP4; dbSNP:rs142285818." evidence="27">
    <original>S</original>
    <variation>R</variation>
    <location>
        <position position="297"/>
    </location>
</feature>
<feature type="sequence variant" id="VAR_004830" description="In RP4; dbSNP:rs183318466.">
    <original>T</original>
    <variation>M</variation>
    <location>
        <position position="342"/>
    </location>
</feature>
<feature type="sequence variant" id="VAR_004831" description="In RP4; dbSNP:rs104893795." evidence="29 32">
    <original>V</original>
    <variation>L</variation>
    <location>
        <position position="345"/>
    </location>
</feature>
<feature type="sequence variant" id="VAR_004832" description="In RP4; dbSNP:rs104893795." evidence="7">
    <original>V</original>
    <variation>M</variation>
    <location>
        <position position="345"/>
    </location>
</feature>
<feature type="sequence variant" id="VAR_004833" description="In RP4." evidence="23">
    <original>P</original>
    <variation>A</variation>
    <location>
        <position position="347"/>
    </location>
</feature>
<feature type="sequence variant" id="VAR_004834" description="In RP4; common variant; dbSNP:rs29001566." evidence="6 15">
    <original>P</original>
    <variation>L</variation>
    <location>
        <position position="347"/>
    </location>
</feature>
<feature type="sequence variant" id="VAR_004835" description="In RP4; dbSNP:rs29001566." evidence="32">
    <original>P</original>
    <variation>Q</variation>
    <location>
        <position position="347"/>
    </location>
</feature>
<feature type="sequence variant" id="VAR_004836" description="In RP4; dbSNP:rs29001566." evidence="8">
    <original>P</original>
    <variation>R</variation>
    <location>
        <position position="347"/>
    </location>
</feature>
<feature type="sequence variant" id="VAR_004837" description="In RP4; dbSNP:rs29001637." evidence="15">
    <original>P</original>
    <variation>S</variation>
    <location>
        <position position="347"/>
    </location>
</feature>
<feature type="mutagenesis site" description="Induces a conformation change that promotes interaction with GRK1 and SAG; when associated with Y-257." evidence="19">
    <original>E</original>
    <variation>Q</variation>
    <location>
        <position position="113"/>
    </location>
</feature>
<feature type="mutagenesis site" description="Induces a conformation change that promotes interaction with GRK1 and SAG; when associated with Q-113." evidence="19 20">
    <original>M</original>
    <variation>Y</variation>
    <location>
        <position position="257"/>
    </location>
</feature>
<feature type="mutagenesis site" description="Loss of phosphorylation sites and decreased interaction with SAG." evidence="21">
    <original>TVSKT</original>
    <variation>AVAKA</variation>
    <location>
        <begin position="336"/>
        <end position="340"/>
    </location>
</feature>
<feature type="mutagenesis site" description="Loss of phosphorylation sites and decreased interaction with SAG; when associated with A-343." evidence="21">
    <original>TVS</original>
    <variation>AVA</variation>
    <location>
        <begin position="336"/>
        <end position="338"/>
    </location>
</feature>
<feature type="mutagenesis site" description="Loss of phosphorylation sites and decreased interaction with SAG; when associated with 336-A--A-338." evidence="21">
    <original>S</original>
    <variation>A</variation>
    <location>
        <position position="343"/>
    </location>
</feature>
<feature type="strand" evidence="48">
    <location>
        <begin position="2"/>
        <end position="5"/>
    </location>
</feature>
<feature type="strand" evidence="48">
    <location>
        <begin position="10"/>
        <end position="13"/>
    </location>
</feature>
<feature type="strand" evidence="48">
    <location>
        <begin position="16"/>
        <end position="18"/>
    </location>
</feature>
<feature type="turn" evidence="48">
    <location>
        <begin position="23"/>
        <end position="25"/>
    </location>
</feature>
<feature type="turn" evidence="47">
    <location>
        <begin position="29"/>
        <end position="31"/>
    </location>
</feature>
<feature type="helix" evidence="48">
    <location>
        <begin position="35"/>
        <end position="64"/>
    </location>
</feature>
<feature type="helix" evidence="48">
    <location>
        <begin position="66"/>
        <end position="68"/>
    </location>
</feature>
<feature type="turn" evidence="48">
    <location>
        <begin position="71"/>
        <end position="73"/>
    </location>
</feature>
<feature type="helix" evidence="48">
    <location>
        <begin position="74"/>
        <end position="88"/>
    </location>
</feature>
<feature type="helix" evidence="48">
    <location>
        <begin position="90"/>
        <end position="100"/>
    </location>
</feature>
<feature type="helix" evidence="48">
    <location>
        <begin position="106"/>
        <end position="140"/>
    </location>
</feature>
<feature type="helix" evidence="48">
    <location>
        <begin position="143"/>
        <end position="147"/>
    </location>
</feature>
<feature type="helix" evidence="48">
    <location>
        <begin position="150"/>
        <end position="168"/>
    </location>
</feature>
<feature type="helix" evidence="48">
    <location>
        <begin position="170"/>
        <end position="173"/>
    </location>
</feature>
<feature type="strand" evidence="47">
    <location>
        <begin position="174"/>
        <end position="176"/>
    </location>
</feature>
<feature type="strand" evidence="48">
    <location>
        <begin position="178"/>
        <end position="181"/>
    </location>
</feature>
<feature type="turn" evidence="48">
    <location>
        <begin position="182"/>
        <end position="185"/>
    </location>
</feature>
<feature type="strand" evidence="48">
    <location>
        <begin position="186"/>
        <end position="189"/>
    </location>
</feature>
<feature type="strand" evidence="48">
    <location>
        <begin position="191"/>
        <end position="193"/>
    </location>
</feature>
<feature type="turn" evidence="48">
    <location>
        <begin position="196"/>
        <end position="199"/>
    </location>
</feature>
<feature type="helix" evidence="48">
    <location>
        <begin position="200"/>
        <end position="209"/>
    </location>
</feature>
<feature type="turn" evidence="48">
    <location>
        <begin position="210"/>
        <end position="212"/>
    </location>
</feature>
<feature type="helix" evidence="48">
    <location>
        <begin position="213"/>
        <end position="236"/>
    </location>
</feature>
<feature type="helix" evidence="48">
    <location>
        <begin position="241"/>
        <end position="277"/>
    </location>
</feature>
<feature type="helix" evidence="48">
    <location>
        <begin position="285"/>
        <end position="306"/>
    </location>
</feature>
<feature type="turn" evidence="48">
    <location>
        <begin position="307"/>
        <end position="309"/>
    </location>
</feature>
<feature type="helix" evidence="48">
    <location>
        <begin position="311"/>
        <end position="321"/>
    </location>
</feature>
<feature type="turn" evidence="47">
    <location>
        <begin position="322"/>
        <end position="324"/>
    </location>
</feature>
<feature type="turn" evidence="48">
    <location>
        <begin position="331"/>
        <end position="333"/>
    </location>
</feature>
<feature type="strand" evidence="48">
    <location>
        <begin position="339"/>
        <end position="341"/>
    </location>
</feature>
<reference key="1">
    <citation type="journal article" date="1984" name="Proc. Natl. Acad. Sci. U.S.A.">
        <title>Isolation and nucleotide sequence of the gene encoding human rhodopsin.</title>
        <authorList>
            <person name="Nathans J."/>
            <person name="Hogness D.S."/>
        </authorList>
    </citation>
    <scope>NUCLEOTIDE SEQUENCE [GENOMIC DNA]</scope>
</reference>
<reference key="2">
    <citation type="submission" date="2001-07" db="EMBL/GenBank/DDBJ databases">
        <title>Genome-wide diskovery and analysis of human seven transmembrane helix receptor genes.</title>
        <authorList>
            <person name="Suwa M."/>
            <person name="Sato T."/>
            <person name="Okouchi I."/>
            <person name="Arita M."/>
            <person name="Futami K."/>
            <person name="Matsumoto S."/>
            <person name="Tsutsumi S."/>
            <person name="Aburatani H."/>
            <person name="Asai K."/>
            <person name="Akiyama Y."/>
        </authorList>
    </citation>
    <scope>NUCLEOTIDE SEQUENCE [GENOMIC DNA]</scope>
</reference>
<reference key="3">
    <citation type="journal article" date="2007" name="BMC Genomics">
        <title>The full-ORF clone resource of the German cDNA consortium.</title>
        <authorList>
            <person name="Bechtel S."/>
            <person name="Rosenfelder H."/>
            <person name="Duda A."/>
            <person name="Schmidt C.P."/>
            <person name="Ernst U."/>
            <person name="Wellenreuther R."/>
            <person name="Mehrle A."/>
            <person name="Schuster C."/>
            <person name="Bahr A."/>
            <person name="Bloecker H."/>
            <person name="Heubner D."/>
            <person name="Hoerlein A."/>
            <person name="Michel G."/>
            <person name="Wedler H."/>
            <person name="Koehrer K."/>
            <person name="Ottenwaelder B."/>
            <person name="Poustka A."/>
            <person name="Wiemann S."/>
            <person name="Schupp I."/>
        </authorList>
    </citation>
    <scope>NUCLEOTIDE SEQUENCE [LARGE SCALE MRNA]</scope>
    <source>
        <tissue>Retina</tissue>
    </source>
</reference>
<reference key="4">
    <citation type="journal article" date="2004" name="Genome Res.">
        <title>The status, quality, and expansion of the NIH full-length cDNA project: the Mammalian Gene Collection (MGC).</title>
        <authorList>
            <consortium name="The MGC Project Team"/>
        </authorList>
    </citation>
    <scope>NUCLEOTIDE SEQUENCE [LARGE SCALE MRNA]</scope>
</reference>
<reference key="5">
    <citation type="journal article" date="1995" name="Gene">
        <title>Sequence analysis of the 5.34-kb 5' flanking region of the human rhodopsin-encoding gene.</title>
        <authorList>
            <person name="Bennett J."/>
            <person name="Beller B."/>
            <person name="Sun D."/>
            <person name="Kariko K."/>
        </authorList>
    </citation>
    <scope>NUCLEOTIDE SEQUENCE [GENOMIC DNA] OF 1-120</scope>
</reference>
<reference key="6">
    <citation type="journal article" date="2015" name="Cilia">
        <title>Ultrastructural visualization of trans-ciliary rhodopsin cargoes in mammalian rods.</title>
        <authorList>
            <person name="Chuang J.Z."/>
            <person name="Hsu Y.C."/>
            <person name="Sung C.H."/>
        </authorList>
    </citation>
    <scope>SUBCELLULAR LOCATION</scope>
</reference>
<reference key="7">
    <citation type="journal article" date="2017" name="Cell Res.">
        <title>Molecular assembly of rhodopsin with G protein-coupled receptor kinases.</title>
        <authorList>
            <person name="He Y."/>
            <person name="Gao X."/>
            <person name="Goswami D."/>
            <person name="Hou L."/>
            <person name="Pal K."/>
            <person name="Yin Y."/>
            <person name="Zhao G."/>
            <person name="Ernst O.P."/>
            <person name="Griffin P."/>
            <person name="Melcher K."/>
            <person name="Xu H.E."/>
        </authorList>
    </citation>
    <scope>INTERACTION WITH GRK1 AND SAG</scope>
    <scope>FUNCTION</scope>
    <scope>MUTAGENESIS OF GLU-113 AND MET-257</scope>
</reference>
<reference evidence="45" key="8">
    <citation type="journal article" date="2015" name="Nature">
        <title>Crystal structure of rhodopsin bound to arrestin by femtosecond X-ray laser.</title>
        <authorList>
            <person name="Kang Y."/>
            <person name="Zhou X.E."/>
            <person name="Gao X."/>
            <person name="He Y."/>
            <person name="Liu W."/>
            <person name="Ishchenko A."/>
            <person name="Barty A."/>
            <person name="White T.A."/>
            <person name="Yefanov O."/>
            <person name="Han G.W."/>
            <person name="Xu Q."/>
            <person name="de Waal P.W."/>
            <person name="Ke J."/>
            <person name="Tan M.H."/>
            <person name="Zhang C."/>
            <person name="Moeller A."/>
            <person name="West G.M."/>
            <person name="Pascal B.D."/>
            <person name="Van Eps N."/>
            <person name="Caro L.N."/>
            <person name="Vishnivetskiy S.A."/>
            <person name="Lee R.J."/>
            <person name="Suino-Powell K.M."/>
            <person name="Gu X."/>
            <person name="Pal K."/>
            <person name="Ma J."/>
            <person name="Zhi X."/>
            <person name="Boutet S."/>
            <person name="Williams G.J."/>
            <person name="Messerschmidt M."/>
            <person name="Gati C."/>
            <person name="Zatsepin N.A."/>
            <person name="Wang D."/>
            <person name="James D."/>
            <person name="Basu S."/>
            <person name="Roy-Chowdhury S."/>
            <person name="Conrad C.E."/>
            <person name="Coe J."/>
            <person name="Liu H."/>
            <person name="Lisova S."/>
            <person name="Kupitz C."/>
            <person name="Grotjohann I."/>
            <person name="Fromme R."/>
            <person name="Jiang Y."/>
            <person name="Tan M."/>
            <person name="Yang H."/>
            <person name="Li J."/>
            <person name="Wang M."/>
            <person name="Zheng Z."/>
            <person name="Li D."/>
            <person name="Howe N."/>
            <person name="Zhao Y."/>
            <person name="Standfuss J."/>
            <person name="Diederichs K."/>
            <person name="Dong Y."/>
            <person name="Potter C.S."/>
            <person name="Carragher B."/>
            <person name="Caffrey M."/>
            <person name="Jiang H."/>
            <person name="Chapman H.N."/>
            <person name="Spence J.C."/>
            <person name="Fromme P."/>
            <person name="Weierstall U."/>
            <person name="Ernst O.P."/>
            <person name="Katritch V."/>
            <person name="Gurevich V.V."/>
            <person name="Griffin P.R."/>
            <person name="Hubbell W.L."/>
            <person name="Stevens R.C."/>
            <person name="Cherezov V."/>
            <person name="Melcher K."/>
            <person name="Xu H.E."/>
        </authorList>
    </citation>
    <scope>X-RAY CRYSTALLOGRAPHY (3.30 ANGSTROMS) OF MUTANT GLN-113 AND TYR-257 IN COMPLEX WITH SAG</scope>
    <scope>INTERACTION WITH SAG AND GNAT1</scope>
    <scope>FUNCTION</scope>
    <scope>SUBCELLULAR LOCATION</scope>
    <scope>MUTAGENESIS OF GLU-113 AND MET-257</scope>
    <scope>TOPOLOGY</scope>
    <scope>DISULFIDE BONDS</scope>
</reference>
<reference evidence="46" key="9">
    <citation type="journal article" date="2017" name="Cell">
        <title>Identification of Phosphorylation Codes for Arrestin Recruitment by G Protein-Coupled Receptors.</title>
        <authorList>
            <person name="Zhou X.E."/>
            <person name="He Y."/>
            <person name="de Waal P.W."/>
            <person name="Gao X."/>
            <person name="Kang Y."/>
            <person name="Van Eps N."/>
            <person name="Yin Y."/>
            <person name="Pal K."/>
            <person name="Goswami D."/>
            <person name="White T.A."/>
            <person name="Barty A."/>
            <person name="Latorraca N.R."/>
            <person name="Chapman H.N."/>
            <person name="Hubbell W.L."/>
            <person name="Dror R.O."/>
            <person name="Stevens R.C."/>
            <person name="Cherezov V."/>
            <person name="Gurevich V.V."/>
            <person name="Griffin P.R."/>
            <person name="Ernst O.P."/>
            <person name="Melcher K."/>
            <person name="Xu H.E."/>
        </authorList>
    </citation>
    <scope>X-RAY CRYSTALLOGRAPHY (3.01 ANGSTROMS) IN COMPLEX WITH SAG</scope>
    <scope>FUNCTION</scope>
    <scope>TOPOLOGY</scope>
    <scope>GLYCOSYLATION AT ASN-15</scope>
    <scope>PHOSPHORYLATION AT SER-334; THR-336 AND SER-338</scope>
    <scope>DISULFIDE BOND</scope>
    <scope>MUTAGENESIS OF 336-THR--THR-340; 336-THR--SER-338 AND SER-343</scope>
</reference>
<reference key="10">
    <citation type="journal article" date="1990" name="Am. J. Hum. Genet.">
        <title>Autosomal dominant retinitis pigmentosa: absence of the rhodopsin proline--&gt;histidine substitution (codon 23) in pedigrees from Europe.</title>
        <authorList>
            <person name="Farrar G.J."/>
            <person name="Kenna P."/>
            <person name="Redmond R."/>
            <person name="McWilliam P."/>
            <person name="Bradley D.G."/>
            <person name="Humphries M.M."/>
            <person name="Sharp E.M."/>
            <person name="Inglehearn C.F."/>
            <person name="Bashir R."/>
            <person name="Jay M."/>
            <person name="Watty A."/>
            <person name="Ludwig M."/>
            <person name="Schinzel A."/>
            <person name="Samanns C."/>
            <person name="Gal A."/>
            <person name="Bhattacharya S.S."/>
            <person name="Humphries P."/>
        </authorList>
    </citation>
    <scope>VARIANTS RP4</scope>
</reference>
<reference key="11">
    <citation type="journal article" date="1990" name="Nature">
        <title>A point mutation of the rhodopsin gene in one form of retinitis pigmentosa.</title>
        <authorList>
            <person name="Dryja T.P."/>
            <person name="McGee T.L."/>
            <person name="Reichei E."/>
            <person name="Hahn L.B."/>
            <person name="Cowley G.S."/>
            <person name="Yandell D.W."/>
            <person name="Sandberg M.A."/>
            <person name="Berson E.L."/>
        </authorList>
    </citation>
    <scope>VARIANT RP4 HIS-23</scope>
</reference>
<reference key="12">
    <citation type="journal article" date="1990" name="N. Engl. J. Med.">
        <title>Mutations within the rhodopsin gene in patients with autosomal dominant retinitis pigmentosa.</title>
        <authorList>
            <person name="Dryja T.P."/>
            <person name="McGee T.L."/>
            <person name="Hahn L.B."/>
            <person name="Cowley G.S."/>
            <person name="Olsson J.E."/>
            <person name="Reichel E."/>
            <person name="Sandberg M.A."/>
            <person name="Berson E.L."/>
        </authorList>
    </citation>
    <scope>VARIANTS RP4 HIS-23; ARG-58; LEU-347 AND SER-347</scope>
    <scope>FUNCTION</scope>
</reference>
<reference key="13">
    <citation type="journal article" date="1991" name="Am. J. Hum. Genet.">
        <title>A 3-bp deletion in the rhodopsin gene in a family with autosomal dominant retinitis pigmentosa.</title>
        <authorList>
            <person name="Inglehearn C.F."/>
            <person name="Bashir R."/>
            <person name="Lester D.H."/>
            <person name="Jay M."/>
            <person name="Bird A.C."/>
            <person name="Bhattacharya S.S."/>
        </authorList>
    </citation>
    <scope>VARIANT RP4 ILE-255 DEL</scope>
</reference>
<reference key="14">
    <citation type="journal article" date="1991" name="Am. J. Hum. Genet.">
        <title>Identification of novel rhodopsin mutations associated with retinitis pigmentosa by GC-clamped denaturing gradient gel electrophoresis.</title>
        <authorList>
            <person name="Sheffield V.C."/>
            <person name="Fishman G.A."/>
            <person name="Beck J.S."/>
            <person name="Kimura A.E."/>
            <person name="Stone E.M."/>
        </authorList>
    </citation>
    <scope>VARIANTS RP4 MET-17; HIS-23; ARG-58; SER-182 AND LEU-267</scope>
</reference>
<reference key="15">
    <citation type="journal article" date="1991" name="Genomics">
        <title>Pro-347-Arg mutation of the rhodopsin gene in autosomal dominant retinitis pigmentosa.</title>
        <authorList>
            <person name="Gal A."/>
            <person name="Artlich A."/>
            <person name="Ludwig M."/>
            <person name="Niemeyer G."/>
            <person name="Olek K."/>
            <person name="Schwinger E."/>
            <person name="Schinzel A."/>
        </authorList>
    </citation>
    <scope>VARIANT RP4 ARG-347</scope>
</reference>
<reference key="16">
    <citation type="journal article" date="1991" name="Proc. Natl. Acad. Sci. U.S.A.">
        <title>Rhodopsin mutations in autosomal dominant retinitis pigmentosa.</title>
        <authorList>
            <person name="Sung C.H."/>
            <person name="Davenport C.M."/>
            <person name="Hennessey J.C."/>
            <person name="Maumenee I.H."/>
            <person name="Jacobson S.G."/>
            <person name="Heckenlively J.R."/>
            <person name="Nowakowski R."/>
            <person name="Fishman G."/>
            <person name="Gouras P."/>
            <person name="Nathans J."/>
        </authorList>
    </citation>
    <scope>VARIANTS RP4</scope>
</reference>
<reference key="17">
    <citation type="journal article" date="1991" name="Proc. Natl. Acad. Sci. U.S.A.">
        <title>Mutation spectrum of the rhodopsin gene among patients with autosomal dominant retinitis pigmentosa.</title>
        <authorList>
            <person name="Dryja T.P."/>
            <person name="Hahn L.B."/>
            <person name="Cowley G.S."/>
            <person name="McGee T.L."/>
            <person name="Berson E.L."/>
        </authorList>
    </citation>
    <scope>VARIANTS RP4</scope>
    <scope>VARIANTS RP4 LEU-23; LEU-45; VAL-51; ARG-188 AND MET-345</scope>
</reference>
<reference key="18">
    <citation type="journal article" date="1992" name="Hum. Mol. Genet.">
        <title>Autosomal dominant retinitis pigmentosa: a novel mutation in the rhodopsin gene in the original 3q linked family.</title>
        <authorList>
            <person name="Farrar G.J."/>
            <person name="Findlay J.B.C."/>
            <person name="Kumar-Singh R."/>
            <person name="Kenna P."/>
            <person name="Humphries M.M."/>
            <person name="Sharpe E."/>
            <person name="Humphries P."/>
        </authorList>
    </citation>
    <scope>VARIANT RP4 ARG-207</scope>
</reference>
<reference key="19">
    <citation type="journal article" date="1992" name="Jpn. J. Hum. Genet.">
        <title>Point mutations of rhodopsin gene found in Japanese families with autosomal dominant retinitis pigmentosa (ADRP).</title>
        <authorList>
            <person name="Fujiki K."/>
            <person name="Hotta Y."/>
            <person name="Hayakawa M."/>
            <person name="Sakuma H."/>
            <person name="Shiono T."/>
            <person name="Noro M."/>
            <person name="Sakuma T."/>
            <person name="Tamai M."/>
            <person name="Hikiji K."/>
            <person name="Kawaguchi R."/>
            <person name="Hoshi A."/>
            <person name="Nakajima A."/>
            <person name="Kanai A."/>
        </authorList>
    </citation>
    <scope>VARIANTS RP4 MET-17 AND LEU-347</scope>
</reference>
<reference key="20">
    <citation type="journal article" date="1993" name="Am. J. Hum. Genet.">
        <title>Identification of novel rhodopsin mutations responsible for retinitis pigmentosa: implications for the structure and function of rhodopsin.</title>
        <authorList>
            <person name="Macke J.P."/>
            <person name="Davenport C.M."/>
            <person name="Jacobson S.G."/>
            <person name="Hennessey J.C."/>
            <person name="Gonzalez-Fernandez F."/>
            <person name="Conway B.P."/>
            <person name="Heckenlively J."/>
            <person name="Palmer R."/>
            <person name="Maumenee I.H."/>
            <person name="Sieving P."/>
            <person name="Gouras P."/>
            <person name="Good W."/>
            <person name="Nathans J."/>
        </authorList>
    </citation>
    <scope>VARIANTS RP4 ARG-106; GLY-135; SER-140; GLU-188 AND ARG-211</scope>
    <scope>VARIANTS ALA-51; ILE-104 AND MET-209</scope>
</reference>
<reference key="21">
    <citation type="journal article" date="1993" name="Genomics">
        <title>Molecular analysis and genetic mapping of the rhodopsin gene in families with autosomal dominant retinitis pigmentosa.</title>
        <authorList>
            <person name="Bunge S."/>
            <person name="Wedemann H."/>
            <person name="David D."/>
            <person name="Terwilliger D.J."/>
            <person name="van den Born L.I."/>
            <person name="Aulehla-Scholz C."/>
            <person name="Samanns C."/>
            <person name="Horn M."/>
            <person name="Ott J."/>
            <person name="Schwinger E."/>
        </authorList>
    </citation>
    <scope>VARIANT RP4 CYS-220</scope>
</reference>
<reference key="22">
    <citation type="journal article" date="1993" name="Hum. Mutat.">
        <title>Rhodopsin mutations in autosomal dominant retinitis pigmentosa.</title>
        <authorList>
            <person name="Al-Maghtheh M."/>
            <person name="Gregory C."/>
            <person name="Inglehearn C."/>
            <person name="Hardcastle A."/>
            <person name="Bhattacharya S."/>
        </authorList>
    </citation>
    <scope>VARIANTS RP4 LYS-4; HIS-28; ARG-51; ARG-53; ASP-87; TRP-106; TYR-110; ARG-125; LEU-135; CYS-178; LYS-181; PRO-186; ASN-190; GLY-190 AND TYR-190</scope>
</reference>
<reference key="23">
    <citation type="journal article" date="1993" name="Hum. Mol. Genet.">
        <title>Autosomal dominant 'sector' retinitis pigmentosa due to a point mutation predicting an Asn-15-Ser substitution of rhodopsin.</title>
        <authorList>
            <person name="Kranich H."/>
            <person name="Bartkowski S."/>
            <person name="Denton M.J."/>
            <person name="Krey S."/>
            <person name="Dickinson P."/>
            <person name="Duvigneau C."/>
            <person name="Gal A."/>
        </authorList>
    </citation>
    <scope>VARIANT RP4 SER-15</scope>
</reference>
<reference key="24">
    <citation type="journal article" date="1993" name="Hum. Mutat.">
        <title>A leucine to arginine amino acid substitution at codon 46 of rhodopsin is responsible for a severe form of autosomal dominant retinitis pigmentosa.</title>
        <authorList>
            <person name="Rodriguez J.A."/>
            <person name="Herrera C.A."/>
            <person name="Birch D.G."/>
            <person name="Daiger S.P."/>
        </authorList>
    </citation>
    <scope>VARIANT RP4 ARG-46</scope>
</reference>
<reference key="25">
    <citation type="journal article" date="1993" name="Nat. Genet.">
        <title>Heterozygous missense mutation in the rhodopsin gene as a cause of congenital stationary night blindness.</title>
        <authorList>
            <person name="Dryja T.P."/>
            <person name="Berson E.L."/>
            <person name="Rao V.R."/>
            <person name="Oprian D.D."/>
        </authorList>
    </citation>
    <scope>VARIANT CSNBAD1 GLU-292</scope>
</reference>
<reference key="26">
    <citation type="journal article" date="1994" name="Genomics">
        <title>Further screening of the rhodopsin gene in patients with autosomal dominant retinitis pigmentosa.</title>
        <authorList>
            <person name="Vaithinathan R."/>
            <person name="Berson E.L."/>
            <person name="Dryja T.P."/>
        </authorList>
    </citation>
    <scope>VARIANTS RP4 ASP-114; GLU-164; ARG-167; LEU-171; SER-171; LEU-345 AND GLN-347</scope>
</reference>
<reference key="27">
    <citation type="journal article" date="1994" name="Hum. Genet.">
        <title>Identification of a novel rhodopsin mutation (Met-44-Thr) in a simplex case of retinitis pigmentosa.</title>
        <authorList>
            <person name="Reig C."/>
            <person name="Antich J."/>
            <person name="Gean E."/>
            <person name="Garcia-Sandoval B."/>
            <person name="Ramos C."/>
            <person name="Ayuso C."/>
            <person name="Carballo M."/>
        </authorList>
    </citation>
    <scope>VARIANT RP4 THR-44</scope>
</reference>
<reference key="28">
    <citation type="journal article" date="1994" name="Hum. Mol. Genet.">
        <title>Three novel rhodopsin mutations (C110F, L131P, A164V) in patients with autosomal dominant retinitis pigmentosa.</title>
        <authorList>
            <person name="Fuchs S."/>
            <person name="Kranich H."/>
            <person name="Denton M.J."/>
            <person name="Zrenner E."/>
            <person name="Bhattacharya S.S."/>
            <person name="Humphries P."/>
            <person name="Gal A."/>
        </authorList>
    </citation>
    <scope>VARIANTS RP4 PHE-110; PRO-131 AND VAL-164</scope>
</reference>
<reference key="29">
    <citation type="journal article" date="1994" name="Hum. Mol. Genet.">
        <title>Identification of a new mutation at codon 171 of rhodopsin gene causing autosomal dominant retinitis pigmentosa.</title>
        <authorList>
            <person name="Antinolo G."/>
            <person name="Sanchez B."/>
            <person name="Borrego S."/>
            <person name="Rueda T."/>
            <person name="Chaparro P."/>
            <person name="Cabeza J.C."/>
        </authorList>
    </citation>
    <scope>VARIANT RP4 GLN-171</scope>
</reference>
<reference key="30">
    <citation type="journal article" date="1994" name="Hum. Mol. Genet.">
        <title>Five novel missense mutations of the rhodopsin gene in autosomal dominant retinitis pigmentosa.</title>
        <authorList>
            <person name="Souied E."/>
            <person name="Gerber S."/>
            <person name="Rozet J.-M."/>
            <person name="Bonneau D."/>
            <person name="Dufier J.-L."/>
            <person name="Ghazi I."/>
            <person name="Philip N."/>
            <person name="Soubrane G."/>
            <person name="Coscas G."/>
            <person name="Munnich A."/>
        </authorList>
    </citation>
    <scope>VARIANTS RP4 PHE-127; PRO-131; ASN-178; ARG-267 AND ARG-297</scope>
</reference>
<reference key="31">
    <citation type="journal article" date="1994" name="Hum. Mutat.">
        <title>Two new rhodopsin transversion mutations (L40R; M216K) in families with autosomal dominant retinitis pigmentosa.</title>
        <authorList>
            <person name="Al-Maghtheh M."/>
            <person name="Inglehearn C."/>
            <person name="Lunt P."/>
            <person name="Jay M."/>
            <person name="Bird A."/>
            <person name="Bhattacharya S."/>
        </authorList>
    </citation>
    <scope>VARIANTS RP4 ARG-40 AND LYS-216</scope>
</reference>
<reference key="32">
    <citation type="journal article" date="1994" name="Invest. Ophthalmol. Vis. Sci.">
        <title>Autosomal dominant retinitis pigmentosa in a large family: a clinical and molecular genetic study.</title>
        <authorList>
            <person name="Rosas D.J."/>
            <person name="Roman A.J."/>
            <person name="Weissbrod P."/>
            <person name="Macke J.P."/>
            <person name="Nathans J."/>
        </authorList>
    </citation>
    <scope>VARIANT RP4 LEU-345</scope>
</reference>
<reference key="33">
    <citation type="journal article" date="1994" name="Nature">
        <title>Rhodopsin mutation G90D and a molecular mechanism for congenital night blindness.</title>
        <authorList>
            <person name="Rao V.R."/>
            <person name="Cohen G.B."/>
            <person name="Oprian D.D."/>
        </authorList>
    </citation>
    <scope>CHARACTERIZATION OF VARIANT CSNBAD1 ASP-90</scope>
    <scope>FUNCTION</scope>
</reference>
<reference key="34">
    <citation type="journal article" date="1994" name="Nat. Genet.">
        <title>Missense rhodopsin mutation in a family with recessive RP.</title>
        <authorList>
            <person name="Kumaramanickavel G."/>
            <person name="Maw M."/>
            <person name="Denton M.J."/>
            <person name="John S."/>
            <person name="Srikumari C.R."/>
            <person name="Orth U."/>
            <person name="Oehlmann R."/>
            <person name="Gal A."/>
        </authorList>
    </citation>
    <scope>VARIANT ARRP LYS-150</scope>
</reference>
<reference key="35">
    <citation type="journal article" date="1995" name="Hum. Mol. Genet.">
        <title>Rhodopsin mutation proline347-to-alanine in a family with autosomal dominant retinitis pigmentosa indicates an important role for proline at position 347.</title>
        <authorList>
            <person name="Macke J.P."/>
            <person name="Hennessey J.C."/>
            <person name="Nathans J."/>
        </authorList>
    </citation>
    <scope>VARIANT RP4 ALA-347</scope>
</reference>
<reference key="36">
    <citation type="journal article" date="1995" name="Proc. Natl. Acad. Sci. U.S.A.">
        <title>Dark-light: model for nightblindness from the human rhodopsin Gly-90--&gt;Asp mutation.</title>
        <authorList>
            <person name="Sieving P.A."/>
            <person name="Richards J.E."/>
            <person name="Naarendorp F."/>
            <person name="Bingham E.L."/>
            <person name="Scott K."/>
            <person name="Alpern M."/>
        </authorList>
    </citation>
    <scope>VARIANT CSNBAD1 ASP-90</scope>
    <scope>FUNCTION</scope>
</reference>
<reference key="37">
    <citation type="journal article" date="1996" name="Am. J. Ophthalmol.">
        <title>Retinitis punctata albescens associated with the Arg135Trp mutation in the rhodopsin gene.</title>
        <authorList>
            <person name="Souied E."/>
            <person name="Soubrane G."/>
            <person name="Benlian P."/>
            <person name="Coscas G.J."/>
            <person name="Gerber S."/>
            <person name="Munnich A."/>
            <person name="Kaplan J."/>
        </authorList>
    </citation>
    <scope>VARIANT RP4 TRP-135</scope>
</reference>
<reference key="38">
    <citation type="journal article" date="1998" name="Hum. Mutat. Suppl.">
        <title>Rhodopsin mutation G109R in a family with autosomal dominant retinitis pigmentosa.</title>
        <authorList>
            <person name="Goliath R."/>
            <person name="Bardien S."/>
            <person name="September A."/>
            <person name="Martin R."/>
            <person name="Ramesar R."/>
            <person name="Greenberg J."/>
        </authorList>
    </citation>
    <scope>VARIANT RP4 ARG-109</scope>
</reference>
<reference key="39">
    <citation type="journal article" date="1999" name="Hum. Mutat.">
        <title>A novel mutation within the rhodopsin gene (Thr-94-Ile) causing autosomal dominant congenital stationary night blindness.</title>
        <authorList>
            <person name="Al-Jandal N."/>
            <person name="Farrar G.J."/>
            <person name="Kiang A.-S."/>
            <person name="Humphries M.M."/>
            <person name="Bannon N."/>
            <person name="Findlay J.B.C."/>
            <person name="Humphries P."/>
            <person name="Kenna P.F."/>
        </authorList>
    </citation>
    <scope>VARIANT CSNBAD1 ILE-94</scope>
</reference>
<reference key="40">
    <citation type="journal article" date="2003" name="J. Biol. Chem.">
        <title>Pharmacological chaperone-mediated in vivo folding and stabilization of the P23H-opsin mutant associated with autosomal dominant retinitis pigmentosa.</title>
        <authorList>
            <person name="Noorwez S.M."/>
            <person name="Kuksa V."/>
            <person name="Imanishi Y."/>
            <person name="Zhu L."/>
            <person name="Filipek S."/>
            <person name="Palczewski K."/>
            <person name="Kaushal S."/>
        </authorList>
    </citation>
    <scope>CHARACTERIZATION OF VARIANT RP4 HIS-23</scope>
    <scope>FUNCTION</scope>
    <scope>SUBCELLULAR LOCATION</scope>
</reference>
<reference key="41">
    <citation type="journal article" date="2009" name="J. Cell Sci.">
        <title>A dual role for EDEM1 in the processing of rod opsin.</title>
        <authorList>
            <person name="Kosmaoglou M."/>
            <person name="Kanuga N."/>
            <person name="Aguila M."/>
            <person name="Garriga P."/>
            <person name="Cheetham M.E."/>
        </authorList>
    </citation>
    <scope>CHARACTERIZATION OF VARIANT RP4 HIS-23</scope>
    <scope>SUBCELLULAR LOCATION</scope>
</reference>
<reference key="42">
    <citation type="journal article" date="2009" name="Mol. Vis.">
        <title>A homozygous p.Glu150Lys mutation in the opsin gene of two Pakistani families with autosomal recessive retinitis pigmentosa.</title>
        <authorList>
            <person name="Azam M."/>
            <person name="Khan M.I."/>
            <person name="Gal A."/>
            <person name="Hussain A."/>
            <person name="Shah S.T."/>
            <person name="Khan M.S."/>
            <person name="Sadeque A."/>
            <person name="Bokhari H."/>
            <person name="Collin R.W."/>
            <person name="Orth U."/>
            <person name="van Genderen M.M."/>
            <person name="den Hollander A.I."/>
            <person name="Cremers F.P."/>
            <person name="Qamar R."/>
        </authorList>
    </citation>
    <scope>VARIANT RP4 LYS-150</scope>
</reference>
<reference key="43">
    <citation type="journal article" date="2012" name="Hum. Mutat.">
        <title>Next-generation genetic testing for retinitis pigmentosa.</title>
        <authorList>
            <person name="Neveling K."/>
            <person name="Collin R.W."/>
            <person name="Gilissen C."/>
            <person name="van Huet R.A."/>
            <person name="Visser L."/>
            <person name="Kwint M.P."/>
            <person name="Gijsen S.J."/>
            <person name="Zonneveld M.N."/>
            <person name="Wieskamp N."/>
            <person name="de Ligt J."/>
            <person name="Siemiatkowska A.M."/>
            <person name="Hoefsloot L.H."/>
            <person name="Buckley M.F."/>
            <person name="Kellner U."/>
            <person name="Branham K.E."/>
            <person name="den Hollander A.I."/>
            <person name="Hoischen A."/>
            <person name="Hoyng C."/>
            <person name="Klevering B.J."/>
            <person name="van den Born L.I."/>
            <person name="Veltman J.A."/>
            <person name="Cremers F.P."/>
            <person name="Scheffer H."/>
        </authorList>
    </citation>
    <scope>VARIANTS RP4 TRP-135; SER-180 AND ASN-214</scope>
</reference>
<reference key="44">
    <citation type="journal article" date="2017" name="Invest. Ophthalmol. Vis. Sci.">
        <title>A novel potentially causative variant of NDUFAF7 revealed by mutation screening in a chinese family with pathologic myopia.</title>
        <authorList>
            <person name="Wang B."/>
            <person name="Liu Y."/>
            <person name="Chen S."/>
            <person name="Wu Y."/>
            <person name="Lin S."/>
            <person name="Duan Y."/>
            <person name="Zheng K."/>
            <person name="Zhang L."/>
            <person name="Gu X."/>
            <person name="Hong W."/>
            <person name="Shao H."/>
            <person name="Zeng X."/>
            <person name="Sun B."/>
            <person name="Duan S."/>
        </authorList>
    </citation>
    <scope>VARIANT ILE-104</scope>
</reference>
<evidence type="ECO:0000250" key="1">
    <source>
        <dbReference type="UniProtKB" id="P02699"/>
    </source>
</evidence>
<evidence type="ECO:0000250" key="2">
    <source>
        <dbReference type="UniProtKB" id="P15409"/>
    </source>
</evidence>
<evidence type="ECO:0000255" key="3">
    <source>
        <dbReference type="PROSITE-ProRule" id="PRU00521"/>
    </source>
</evidence>
<evidence type="ECO:0000269" key="4">
    <source>
    </source>
</evidence>
<evidence type="ECO:0000269" key="5">
    <source>
    </source>
</evidence>
<evidence type="ECO:0000269" key="6">
    <source>
    </source>
</evidence>
<evidence type="ECO:0000269" key="7">
    <source>
    </source>
</evidence>
<evidence type="ECO:0000269" key="8">
    <source>
    </source>
</evidence>
<evidence type="ECO:0000269" key="9">
    <source>
    </source>
</evidence>
<evidence type="ECO:0000269" key="10">
    <source>
    </source>
</evidence>
<evidence type="ECO:0000269" key="11">
    <source>
    </source>
</evidence>
<evidence type="ECO:0000269" key="12">
    <source>
    </source>
</evidence>
<evidence type="ECO:0000269" key="13">
    <source>
    </source>
</evidence>
<evidence type="ECO:0000269" key="14">
    <source>
    </source>
</evidence>
<evidence type="ECO:0000269" key="15">
    <source>
    </source>
</evidence>
<evidence type="ECO:0000269" key="16">
    <source>
    </source>
</evidence>
<evidence type="ECO:0000269" key="17">
    <source>
    </source>
</evidence>
<evidence type="ECO:0000269" key="18">
    <source>
    </source>
</evidence>
<evidence type="ECO:0000269" key="19">
    <source>
    </source>
</evidence>
<evidence type="ECO:0000269" key="20">
    <source>
    </source>
</evidence>
<evidence type="ECO:0000269" key="21">
    <source>
    </source>
</evidence>
<evidence type="ECO:0000269" key="22">
    <source>
    </source>
</evidence>
<evidence type="ECO:0000269" key="23">
    <source>
    </source>
</evidence>
<evidence type="ECO:0000269" key="24">
    <source>
    </source>
</evidence>
<evidence type="ECO:0000269" key="25">
    <source>
    </source>
</evidence>
<evidence type="ECO:0000269" key="26">
    <source>
    </source>
</evidence>
<evidence type="ECO:0000269" key="27">
    <source>
    </source>
</evidence>
<evidence type="ECO:0000269" key="28">
    <source>
    </source>
</evidence>
<evidence type="ECO:0000269" key="29">
    <source>
    </source>
</evidence>
<evidence type="ECO:0000269" key="30">
    <source>
    </source>
</evidence>
<evidence type="ECO:0000269" key="31">
    <source>
    </source>
</evidence>
<evidence type="ECO:0000269" key="32">
    <source>
    </source>
</evidence>
<evidence type="ECO:0000269" key="33">
    <source>
    </source>
</evidence>
<evidence type="ECO:0000269" key="34">
    <source>
    </source>
</evidence>
<evidence type="ECO:0000269" key="35">
    <source>
    </source>
</evidence>
<evidence type="ECO:0000269" key="36">
    <source>
    </source>
</evidence>
<evidence type="ECO:0000269" key="37">
    <source>
    </source>
</evidence>
<evidence type="ECO:0000269" key="38">
    <source>
    </source>
</evidence>
<evidence type="ECO:0000269" key="39">
    <source>
    </source>
</evidence>
<evidence type="ECO:0000269" key="40">
    <source>
    </source>
</evidence>
<evidence type="ECO:0000269" key="41">
    <source>
    </source>
</evidence>
<evidence type="ECO:0000269" key="42">
    <source>
    </source>
</evidence>
<evidence type="ECO:0000305" key="43">
    <source>
    </source>
</evidence>
<evidence type="ECO:0000305" key="44">
    <source>
    </source>
</evidence>
<evidence type="ECO:0007744" key="45">
    <source>
        <dbReference type="PDB" id="4ZWJ"/>
    </source>
</evidence>
<evidence type="ECO:0007744" key="46">
    <source>
        <dbReference type="PDB" id="5W0P"/>
    </source>
</evidence>
<evidence type="ECO:0007829" key="47">
    <source>
        <dbReference type="PDB" id="4ZWJ"/>
    </source>
</evidence>
<evidence type="ECO:0007829" key="48">
    <source>
        <dbReference type="PDB" id="5W0P"/>
    </source>
</evidence>